<protein>
    <recommendedName>
        <fullName>Chaperone protein NfaE</fullName>
    </recommendedName>
</protein>
<reference key="1">
    <citation type="journal article" date="1993" name="Infect. Immun.">
        <title>Genetic analysis of the gene cluster encoding nonfimbrial adhesin I from an Escherichia coli uropathogen.</title>
        <authorList>
            <person name="Ahrens R."/>
            <person name="Ott M."/>
            <person name="Ritter A."/>
            <person name="Hoschuetzky H."/>
            <person name="Buehler T."/>
            <person name="Lottspeich F."/>
            <person name="Boulnois G.J."/>
            <person name="Jann K."/>
            <person name="Hacker J."/>
        </authorList>
    </citation>
    <scope>NUCLEOTIDE SEQUENCE [GENOMIC DNA]</scope>
    <source>
        <strain>O83:K1:H4 / 827 / UPEC</strain>
    </source>
</reference>
<keyword id="KW-0143">Chaperone</keyword>
<keyword id="KW-0393">Immunoglobulin domain</keyword>
<keyword id="KW-0574">Periplasm</keyword>
<keyword id="KW-0732">Signal</keyword>
<sequence>MKMRAVAVFTGMLTGVLSVTGLLSAGAYAAGGEGNMSASATETNARVFSLHLGATRVVYNPASSGETLTVINDQDYPMLVQSEVLSEDQKSPAPFWWTPPLFRRDGQQSSRRRSVSTGGEFPSDRESRQWICVKGIPPKEDDRWAEGKDGEKKADKVSLNVQLSVSSCIKLFVRPPAVKGRPDDVAGKVEWQRAGNRLKGVNPTPFYINLSTLTVGGKEVKEREYIAPFSSREYPLPAGHRVRFSGR</sequence>
<gene>
    <name type="primary">nfaE</name>
</gene>
<proteinExistence type="inferred from homology"/>
<evidence type="ECO:0000250" key="1"/>
<evidence type="ECO:0000255" key="2"/>
<evidence type="ECO:0000256" key="3">
    <source>
        <dbReference type="SAM" id="MobiDB-lite"/>
    </source>
</evidence>
<evidence type="ECO:0000305" key="4"/>
<comment type="function">
    <text>Involved in the biogenesis of the NFA-I adhesin.</text>
</comment>
<comment type="subcellular location">
    <subcellularLocation>
        <location evidence="1">Periplasm</location>
    </subcellularLocation>
</comment>
<comment type="similarity">
    <text evidence="4">Belongs to the periplasmic pilus chaperone family.</text>
</comment>
<organism>
    <name type="scientific">Escherichia coli</name>
    <dbReference type="NCBI Taxonomy" id="562"/>
    <lineage>
        <taxon>Bacteria</taxon>
        <taxon>Pseudomonadati</taxon>
        <taxon>Pseudomonadota</taxon>
        <taxon>Gammaproteobacteria</taxon>
        <taxon>Enterobacterales</taxon>
        <taxon>Enterobacteriaceae</taxon>
        <taxon>Escherichia</taxon>
    </lineage>
</organism>
<name>NFAE_ECOLX</name>
<accession>P46738</accession>
<dbReference type="EMBL" id="AH004279">
    <property type="protein sequence ID" value="AAB26855.2"/>
    <property type="molecule type" value="Genomic_DNA"/>
</dbReference>
<dbReference type="SMR" id="P46738"/>
<dbReference type="GO" id="GO:0030288">
    <property type="term" value="C:outer membrane-bounded periplasmic space"/>
    <property type="evidence" value="ECO:0007669"/>
    <property type="project" value="InterPro"/>
</dbReference>
<dbReference type="GO" id="GO:0071555">
    <property type="term" value="P:cell wall organization"/>
    <property type="evidence" value="ECO:0007669"/>
    <property type="project" value="InterPro"/>
</dbReference>
<dbReference type="GO" id="GO:0061077">
    <property type="term" value="P:chaperone-mediated protein folding"/>
    <property type="evidence" value="ECO:0007669"/>
    <property type="project" value="InterPro"/>
</dbReference>
<dbReference type="Gene3D" id="2.60.40.10">
    <property type="entry name" value="Immunoglobulins"/>
    <property type="match status" value="2"/>
</dbReference>
<dbReference type="InterPro" id="IPR013783">
    <property type="entry name" value="Ig-like_fold"/>
</dbReference>
<dbReference type="InterPro" id="IPR008962">
    <property type="entry name" value="PapD-like_sf"/>
</dbReference>
<dbReference type="InterPro" id="IPR050643">
    <property type="entry name" value="Periplasmic_pilus_chap"/>
</dbReference>
<dbReference type="InterPro" id="IPR036316">
    <property type="entry name" value="Pili_assmbl_chap_C_dom_sf"/>
</dbReference>
<dbReference type="InterPro" id="IPR001829">
    <property type="entry name" value="Pili_assmbl_chaperone_bac"/>
</dbReference>
<dbReference type="InterPro" id="IPR016148">
    <property type="entry name" value="Pili_assmbl_chaperone_C"/>
</dbReference>
<dbReference type="InterPro" id="IPR018046">
    <property type="entry name" value="Pili_assmbl_chaperone_CS"/>
</dbReference>
<dbReference type="InterPro" id="IPR016147">
    <property type="entry name" value="Pili_assmbl_chaperone_N"/>
</dbReference>
<dbReference type="PANTHER" id="PTHR30251:SF9">
    <property type="entry name" value="CHAPERONE PROTEIN CAF1M"/>
    <property type="match status" value="1"/>
</dbReference>
<dbReference type="PANTHER" id="PTHR30251">
    <property type="entry name" value="PILUS ASSEMBLY CHAPERONE"/>
    <property type="match status" value="1"/>
</dbReference>
<dbReference type="Pfam" id="PF02753">
    <property type="entry name" value="PapD_C"/>
    <property type="match status" value="1"/>
</dbReference>
<dbReference type="Pfam" id="PF00345">
    <property type="entry name" value="PapD_N"/>
    <property type="match status" value="1"/>
</dbReference>
<dbReference type="PRINTS" id="PR00969">
    <property type="entry name" value="CHAPERONPILI"/>
</dbReference>
<dbReference type="SUPFAM" id="SSF49354">
    <property type="entry name" value="PapD-like"/>
    <property type="match status" value="1"/>
</dbReference>
<dbReference type="SUPFAM" id="SSF49584">
    <property type="entry name" value="Periplasmic chaperone C-domain"/>
    <property type="match status" value="1"/>
</dbReference>
<dbReference type="PROSITE" id="PS00635">
    <property type="entry name" value="PILI_CHAPERONE"/>
    <property type="match status" value="1"/>
</dbReference>
<feature type="signal peptide" evidence="2">
    <location>
        <begin position="1"/>
        <end position="29"/>
    </location>
</feature>
<feature type="chain" id="PRO_0000009284" description="Chaperone protein NfaE">
    <location>
        <begin position="30"/>
        <end position="247"/>
    </location>
</feature>
<feature type="region of interest" description="Disordered" evidence="3">
    <location>
        <begin position="106"/>
        <end position="125"/>
    </location>
</feature>